<organism>
    <name type="scientific">Helicosporidium sp. subsp. Simulium jonesii</name>
    <name type="common">Green alga</name>
    <dbReference type="NCBI Taxonomy" id="145475"/>
    <lineage>
        <taxon>Eukaryota</taxon>
        <taxon>Viridiplantae</taxon>
        <taxon>Chlorophyta</taxon>
        <taxon>core chlorophytes</taxon>
        <taxon>Trebouxiophyceae</taxon>
        <taxon>Chlorellales</taxon>
        <taxon>Chlorellaceae</taxon>
        <taxon>Helicosporidium</taxon>
    </lineage>
</organism>
<accession>Q2EEX2</accession>
<protein>
    <recommendedName>
        <fullName>DNA-directed RNA polymerase subunit beta</fullName>
        <ecNumber>2.7.7.6</ecNumber>
    </recommendedName>
    <alternativeName>
        <fullName>PEP</fullName>
    </alternativeName>
    <alternativeName>
        <fullName>Plastid-encoded RNA polymerase subunit beta</fullName>
        <shortName>RNA polymerase subunit beta</shortName>
    </alternativeName>
</protein>
<dbReference type="EC" id="2.7.7.6"/>
<dbReference type="EMBL" id="DQ398104">
    <property type="protein sequence ID" value="ABD33970.1"/>
    <property type="molecule type" value="Genomic_DNA"/>
</dbReference>
<dbReference type="RefSeq" id="YP_635922.1">
    <property type="nucleotide sequence ID" value="NC_008100.1"/>
</dbReference>
<dbReference type="SMR" id="Q2EEX2"/>
<dbReference type="GeneID" id="4100442"/>
<dbReference type="GO" id="GO:0000428">
    <property type="term" value="C:DNA-directed RNA polymerase complex"/>
    <property type="evidence" value="ECO:0007669"/>
    <property type="project" value="UniProtKB-KW"/>
</dbReference>
<dbReference type="GO" id="GO:0005739">
    <property type="term" value="C:mitochondrion"/>
    <property type="evidence" value="ECO:0007669"/>
    <property type="project" value="GOC"/>
</dbReference>
<dbReference type="GO" id="GO:0009536">
    <property type="term" value="C:plastid"/>
    <property type="evidence" value="ECO:0007669"/>
    <property type="project" value="UniProtKB-SubCell"/>
</dbReference>
<dbReference type="GO" id="GO:0003677">
    <property type="term" value="F:DNA binding"/>
    <property type="evidence" value="ECO:0007669"/>
    <property type="project" value="InterPro"/>
</dbReference>
<dbReference type="GO" id="GO:0003899">
    <property type="term" value="F:DNA-directed RNA polymerase activity"/>
    <property type="evidence" value="ECO:0007669"/>
    <property type="project" value="UniProtKB-EC"/>
</dbReference>
<dbReference type="GO" id="GO:0032549">
    <property type="term" value="F:ribonucleoside binding"/>
    <property type="evidence" value="ECO:0007669"/>
    <property type="project" value="InterPro"/>
</dbReference>
<dbReference type="GO" id="GO:0006351">
    <property type="term" value="P:DNA-templated transcription"/>
    <property type="evidence" value="ECO:0007669"/>
    <property type="project" value="InterPro"/>
</dbReference>
<dbReference type="Gene3D" id="2.40.50.150">
    <property type="match status" value="1"/>
</dbReference>
<dbReference type="Gene3D" id="3.90.1100.10">
    <property type="match status" value="1"/>
</dbReference>
<dbReference type="Gene3D" id="2.40.270.10">
    <property type="entry name" value="DNA-directed RNA polymerase, subunit 2, domain 6"/>
    <property type="match status" value="2"/>
</dbReference>
<dbReference type="Gene3D" id="3.90.1800.10">
    <property type="entry name" value="RNA polymerase alpha subunit dimerisation domain"/>
    <property type="match status" value="1"/>
</dbReference>
<dbReference type="Gene3D" id="3.90.1110.10">
    <property type="entry name" value="RNA polymerase Rpb2, domain 2"/>
    <property type="match status" value="1"/>
</dbReference>
<dbReference type="InterPro" id="IPR015712">
    <property type="entry name" value="DNA-dir_RNA_pol_su2"/>
</dbReference>
<dbReference type="InterPro" id="IPR007120">
    <property type="entry name" value="DNA-dir_RNAP_su2_dom"/>
</dbReference>
<dbReference type="InterPro" id="IPR037033">
    <property type="entry name" value="DNA-dir_RNAP_su2_hyb_sf"/>
</dbReference>
<dbReference type="InterPro" id="IPR037034">
    <property type="entry name" value="RNA_pol_Rpb2_2_sf"/>
</dbReference>
<dbReference type="InterPro" id="IPR007645">
    <property type="entry name" value="RNA_pol_Rpb2_3"/>
</dbReference>
<dbReference type="InterPro" id="IPR007641">
    <property type="entry name" value="RNA_pol_Rpb2_7"/>
</dbReference>
<dbReference type="InterPro" id="IPR014724">
    <property type="entry name" value="RNA_pol_RPB2_OB-fold"/>
</dbReference>
<dbReference type="PANTHER" id="PTHR20856">
    <property type="entry name" value="DNA-DIRECTED RNA POLYMERASE I SUBUNIT 2"/>
    <property type="match status" value="1"/>
</dbReference>
<dbReference type="Pfam" id="PF04565">
    <property type="entry name" value="RNA_pol_Rpb2_3"/>
    <property type="match status" value="1"/>
</dbReference>
<dbReference type="Pfam" id="PF00562">
    <property type="entry name" value="RNA_pol_Rpb2_6"/>
    <property type="match status" value="1"/>
</dbReference>
<dbReference type="Pfam" id="PF04560">
    <property type="entry name" value="RNA_pol_Rpb2_7"/>
    <property type="match status" value="1"/>
</dbReference>
<dbReference type="SUPFAM" id="SSF64484">
    <property type="entry name" value="beta and beta-prime subunits of DNA dependent RNA-polymerase"/>
    <property type="match status" value="1"/>
</dbReference>
<feature type="chain" id="PRO_0000300443" description="DNA-directed RNA polymerase subunit beta">
    <location>
        <begin position="1"/>
        <end position="1247"/>
    </location>
</feature>
<geneLocation type="non-photosynthetic plastid"/>
<comment type="function">
    <text evidence="1">DNA-dependent RNA polymerase catalyzes the transcription of DNA into RNA using the four ribonucleoside triphosphates as substrates.</text>
</comment>
<comment type="catalytic activity">
    <reaction>
        <text>RNA(n) + a ribonucleoside 5'-triphosphate = RNA(n+1) + diphosphate</text>
        <dbReference type="Rhea" id="RHEA:21248"/>
        <dbReference type="Rhea" id="RHEA-COMP:14527"/>
        <dbReference type="Rhea" id="RHEA-COMP:17342"/>
        <dbReference type="ChEBI" id="CHEBI:33019"/>
        <dbReference type="ChEBI" id="CHEBI:61557"/>
        <dbReference type="ChEBI" id="CHEBI:140395"/>
        <dbReference type="EC" id="2.7.7.6"/>
    </reaction>
</comment>
<comment type="subunit">
    <text evidence="1">In plastids the minimal PEP RNA polymerase catalytic core is composed of four subunits: alpha, beta, beta', and beta''. When a (nuclear-encoded) sigma factor is associated with the core the holoenzyme is formed, which can initiate transcription (By similarity).</text>
</comment>
<comment type="subcellular location">
    <subcellularLocation>
        <location>Plastid</location>
    </subcellularLocation>
</comment>
<comment type="similarity">
    <text evidence="2">Belongs to the RNA polymerase beta chain family.</text>
</comment>
<name>RPOB_HELSJ</name>
<gene>
    <name type="primary">rpoB</name>
</gene>
<sequence length="1247" mass="145911">MLLNDQKFLPINIHYLNQGRFDLNKLKNFNLLINQRENWRFFLINGLKLAFKEFEHFKIKNNNFIIDIVFQEKFLFFKQIRQAYLKKVETFGYNIFIPIIITQKILNKKNNLNLTFFKWLDLGILPSLSPKTSFYIDGISRAVSTQKKKSPGLMFDFDLTKKSSLEKREGEAFLKIIAPRGSWFKISYSEDHIIFIEIRNIAYKIPIFTFLCALGFSLESIFQFFNYNINNFKLIPNKYDNTNALIKARNDIFILYSDLLPLLNKTKKNFEIKYIINHYFFSYIWNSNTRYCGEATRLHLYNKVGSPLSLNSLFLEEIDFIYITKIFIYRLINNNFKDENNDNLKNMRFRNGGDYIYLQTRQGLFDFESFLNINLHNIENNSFFCNITTNKKKEDIYSIKKKKNIKNFNLSKISFLKHILLKSWKSFFLSGTLSQFAENLNPLSYITHARRFTSLGPGSLKKAEASIEVRSINPSYNGRVCPIETPEGFNAGLVHSFSLYSFKGVNGELLLPFYFIYKNIKQSYYLPPIFFNIEEESNQSIITGDLIHEKWNDFLNKKLSLRNNFHLDKNDISKISFQSLSPYHMISLATSLIPFLEHNDANRALMGSNMQRQTVPVLGAHNFIVRTGLDTKFFSDISSIPISQINGFNFESNNNYCYFYKIDNLITLNNISYNYIKKTNHNSLYINESIKKKNPWHQQGDFLINNSVIENGKLALGPNLLLAYLPWHGYNYEDAVIINERCVSQKILTSLHIITLTNSLELAYREINKKKEFFYEVPVKLEILFSFFAPFYYNLKYYKNQEFSQFEKKNPSYYTNNINIGTFLKKGDCIFSKCRIRFSFSRELRLQYKELFILLREAFPTFEDFKNFANIFAYDKYKQKLDRKKQKKNTRLKTDNFIFNKNSTLFKKHKLKALINYYNIEDSTIYAQKNQEGLIISKHLKKVPMTYTSITPFDLEEFLSTKESKKKEYYNLFFTKSINIEILQLRDIQLGDKCAGRHGNKGIISKICPINEMPLLPDGTPIDIILNPLGIPSRMNVGQIFESLLGLAGFYLNETYTINIFDEQFGLEASRSFVLSKLYKASILSNKPWLFLKKNAGKTNIIDGLTGKYFQQPITIGYSSILKLIHMVTDKLHGRSIGGYSTLTLQPTKGKSLLGGQRVGEMELWALQGYGASWALQELYTLKSDLVEARQHFQNYINSFNIESNIYDRNDISLTELESLIISDTFKPYTLECFLEDLKALCIYIDY</sequence>
<evidence type="ECO:0000250" key="1"/>
<evidence type="ECO:0000305" key="2"/>
<keyword id="KW-0240">DNA-directed RNA polymerase</keyword>
<keyword id="KW-0548">Nucleotidyltransferase</keyword>
<keyword id="KW-0934">Plastid</keyword>
<keyword id="KW-0804">Transcription</keyword>
<keyword id="KW-0808">Transferase</keyword>
<reference key="1">
    <citation type="journal article" date="2006" name="BMC Biol.">
        <title>The complete plastid genome sequence of the parasitic green alga, Helicosporidium sp. is highly reduced and structured.</title>
        <authorList>
            <person name="de Koning A.P."/>
            <person name="Keeling P.J."/>
        </authorList>
    </citation>
    <scope>NUCLEOTIDE SEQUENCE [LARGE SCALE GENOMIC DNA]</scope>
</reference>
<proteinExistence type="inferred from homology"/>